<name>TAUB_RHIJ3</name>
<dbReference type="EC" id="7.6.2.7" evidence="1"/>
<dbReference type="EMBL" id="AM236084">
    <property type="protein sequence ID" value="CAK10465.1"/>
    <property type="molecule type" value="Genomic_DNA"/>
</dbReference>
<dbReference type="RefSeq" id="WP_011654272.1">
    <property type="nucleotide sequence ID" value="NC_008381.1"/>
</dbReference>
<dbReference type="SMR" id="Q1M7R4"/>
<dbReference type="EnsemblBacteria" id="CAK10465">
    <property type="protein sequence ID" value="CAK10465"/>
    <property type="gene ID" value="pRL100238"/>
</dbReference>
<dbReference type="KEGG" id="rle:pRL100238"/>
<dbReference type="HOGENOM" id="CLU_000604_1_22_5"/>
<dbReference type="Proteomes" id="UP000006575">
    <property type="component" value="Plasmid pRL10"/>
</dbReference>
<dbReference type="GO" id="GO:0005886">
    <property type="term" value="C:plasma membrane"/>
    <property type="evidence" value="ECO:0007669"/>
    <property type="project" value="UniProtKB-SubCell"/>
</dbReference>
<dbReference type="GO" id="GO:0015411">
    <property type="term" value="F:ABC-type taurine transporter transporter activity"/>
    <property type="evidence" value="ECO:0007669"/>
    <property type="project" value="UniProtKB-EC"/>
</dbReference>
<dbReference type="GO" id="GO:0005524">
    <property type="term" value="F:ATP binding"/>
    <property type="evidence" value="ECO:0007669"/>
    <property type="project" value="UniProtKB-KW"/>
</dbReference>
<dbReference type="GO" id="GO:0016887">
    <property type="term" value="F:ATP hydrolysis activity"/>
    <property type="evidence" value="ECO:0007669"/>
    <property type="project" value="InterPro"/>
</dbReference>
<dbReference type="CDD" id="cd03293">
    <property type="entry name" value="ABC_NrtD_SsuB_transporters"/>
    <property type="match status" value="1"/>
</dbReference>
<dbReference type="Gene3D" id="3.40.50.300">
    <property type="entry name" value="P-loop containing nucleotide triphosphate hydrolases"/>
    <property type="match status" value="1"/>
</dbReference>
<dbReference type="InterPro" id="IPR003593">
    <property type="entry name" value="AAA+_ATPase"/>
</dbReference>
<dbReference type="InterPro" id="IPR003439">
    <property type="entry name" value="ABC_transporter-like_ATP-bd"/>
</dbReference>
<dbReference type="InterPro" id="IPR017871">
    <property type="entry name" value="ABC_transporter-like_CS"/>
</dbReference>
<dbReference type="InterPro" id="IPR050166">
    <property type="entry name" value="ABC_transporter_ATP-bind"/>
</dbReference>
<dbReference type="InterPro" id="IPR027417">
    <property type="entry name" value="P-loop_NTPase"/>
</dbReference>
<dbReference type="PANTHER" id="PTHR42788:SF18">
    <property type="entry name" value="TAURINE IMPORT ATP-BINDING PROTEIN TAUB"/>
    <property type="match status" value="1"/>
</dbReference>
<dbReference type="PANTHER" id="PTHR42788">
    <property type="entry name" value="TAURINE IMPORT ATP-BINDING PROTEIN-RELATED"/>
    <property type="match status" value="1"/>
</dbReference>
<dbReference type="Pfam" id="PF00005">
    <property type="entry name" value="ABC_tran"/>
    <property type="match status" value="1"/>
</dbReference>
<dbReference type="SMART" id="SM00382">
    <property type="entry name" value="AAA"/>
    <property type="match status" value="1"/>
</dbReference>
<dbReference type="SUPFAM" id="SSF52540">
    <property type="entry name" value="P-loop containing nucleoside triphosphate hydrolases"/>
    <property type="match status" value="1"/>
</dbReference>
<dbReference type="PROSITE" id="PS00211">
    <property type="entry name" value="ABC_TRANSPORTER_1"/>
    <property type="match status" value="1"/>
</dbReference>
<dbReference type="PROSITE" id="PS50893">
    <property type="entry name" value="ABC_TRANSPORTER_2"/>
    <property type="match status" value="1"/>
</dbReference>
<dbReference type="PROSITE" id="PS51250">
    <property type="entry name" value="TAUB"/>
    <property type="match status" value="1"/>
</dbReference>
<proteinExistence type="inferred from homology"/>
<organism>
    <name type="scientific">Rhizobium johnstonii (strain DSM 114642 / LMG 32736 / 3841)</name>
    <name type="common">Rhizobium leguminosarum bv. viciae</name>
    <dbReference type="NCBI Taxonomy" id="216596"/>
    <lineage>
        <taxon>Bacteria</taxon>
        <taxon>Pseudomonadati</taxon>
        <taxon>Pseudomonadota</taxon>
        <taxon>Alphaproteobacteria</taxon>
        <taxon>Hyphomicrobiales</taxon>
        <taxon>Rhizobiaceae</taxon>
        <taxon>Rhizobium/Agrobacterium group</taxon>
        <taxon>Rhizobium</taxon>
        <taxon>Rhizobium johnstonii</taxon>
    </lineage>
</organism>
<keyword id="KW-0067">ATP-binding</keyword>
<keyword id="KW-0997">Cell inner membrane</keyword>
<keyword id="KW-1003">Cell membrane</keyword>
<keyword id="KW-0472">Membrane</keyword>
<keyword id="KW-0547">Nucleotide-binding</keyword>
<keyword id="KW-0614">Plasmid</keyword>
<keyword id="KW-1278">Translocase</keyword>
<keyword id="KW-0813">Transport</keyword>
<comment type="function">
    <text evidence="1">Part of the ABC transporter complex TauABC involved in taurine import. Responsible for energy coupling to the transport system.</text>
</comment>
<comment type="catalytic activity">
    <reaction evidence="1">
        <text>taurine(out) + ATP + H2O = taurine(in) + ADP + phosphate + H(+)</text>
        <dbReference type="Rhea" id="RHEA:14613"/>
        <dbReference type="ChEBI" id="CHEBI:15377"/>
        <dbReference type="ChEBI" id="CHEBI:15378"/>
        <dbReference type="ChEBI" id="CHEBI:30616"/>
        <dbReference type="ChEBI" id="CHEBI:43474"/>
        <dbReference type="ChEBI" id="CHEBI:456216"/>
        <dbReference type="ChEBI" id="CHEBI:507393"/>
        <dbReference type="EC" id="7.6.2.7"/>
    </reaction>
</comment>
<comment type="subunit">
    <text evidence="1">The complex is composed of two ATP-binding proteins (TauB), two transmembrane proteins (TauC) and a solute-binding protein (TauA).</text>
</comment>
<comment type="subcellular location">
    <subcellularLocation>
        <location evidence="1">Cell inner membrane</location>
        <topology evidence="1">Peripheral membrane protein</topology>
    </subcellularLocation>
</comment>
<comment type="similarity">
    <text evidence="1">Belongs to the ABC transporter superfamily. Taurine importer (TC 3.A.1.17.1) family.</text>
</comment>
<feature type="chain" id="PRO_0000275841" description="Taurine import ATP-binding protein TauB">
    <location>
        <begin position="1"/>
        <end position="262"/>
    </location>
</feature>
<feature type="domain" description="ABC transporter" evidence="1">
    <location>
        <begin position="4"/>
        <end position="234"/>
    </location>
</feature>
<feature type="binding site" evidence="1">
    <location>
        <begin position="39"/>
        <end position="46"/>
    </location>
    <ligand>
        <name>ATP</name>
        <dbReference type="ChEBI" id="CHEBI:30616"/>
    </ligand>
</feature>
<geneLocation type="plasmid">
    <name>pRL10</name>
</geneLocation>
<sequence length="262" mass="28869">MLKVDHASVFFAARYGRTVHALDRVSFDIPERGFVVALGASGCGKSTLLNAIAGFLPLSDGRITLDGRAVEQPGADRGVVFQKDSLLPWKSVIDNVALGLKFAGVKRRERQARALELLRLVGLDEFAGAFPYELSGGMRQRVGIARALATNPDILLMDEPFGALDSLTREQMQELLVSIWDKTAKKVFFITHSIEEALFLGTQVLVMSPRPGRVVARFDLDFVRRFAETGDARSIKASPQFAELREEIRAILHSTEDLRSAA</sequence>
<protein>
    <recommendedName>
        <fullName evidence="1">Taurine import ATP-binding protein TauB</fullName>
        <ecNumber evidence="1">7.6.2.7</ecNumber>
    </recommendedName>
</protein>
<accession>Q1M7R4</accession>
<evidence type="ECO:0000255" key="1">
    <source>
        <dbReference type="HAMAP-Rule" id="MF_01714"/>
    </source>
</evidence>
<reference key="1">
    <citation type="journal article" date="2006" name="Genome Biol.">
        <title>The genome of Rhizobium leguminosarum has recognizable core and accessory components.</title>
        <authorList>
            <person name="Young J.P.W."/>
            <person name="Crossman L.C."/>
            <person name="Johnston A.W.B."/>
            <person name="Thomson N.R."/>
            <person name="Ghazoui Z.F."/>
            <person name="Hull K.H."/>
            <person name="Wexler M."/>
            <person name="Curson A.R.J."/>
            <person name="Todd J.D."/>
            <person name="Poole P.S."/>
            <person name="Mauchline T.H."/>
            <person name="East A.K."/>
            <person name="Quail M.A."/>
            <person name="Churcher C."/>
            <person name="Arrowsmith C."/>
            <person name="Cherevach I."/>
            <person name="Chillingworth T."/>
            <person name="Clarke K."/>
            <person name="Cronin A."/>
            <person name="Davis P."/>
            <person name="Fraser A."/>
            <person name="Hance Z."/>
            <person name="Hauser H."/>
            <person name="Jagels K."/>
            <person name="Moule S."/>
            <person name="Mungall K."/>
            <person name="Norbertczak H."/>
            <person name="Rabbinowitsch E."/>
            <person name="Sanders M."/>
            <person name="Simmonds M."/>
            <person name="Whitehead S."/>
            <person name="Parkhill J."/>
        </authorList>
    </citation>
    <scope>NUCLEOTIDE SEQUENCE [LARGE SCALE GENOMIC DNA]</scope>
    <source>
        <strain>DSM 114642 / LMG 32736 / 3841</strain>
    </source>
</reference>
<gene>
    <name evidence="1" type="primary">tauB</name>
    <name type="ordered locus">pRL100238</name>
</gene>